<proteinExistence type="inferred from homology"/>
<keyword id="KW-0004">4Fe-4S</keyword>
<keyword id="KW-0408">Iron</keyword>
<keyword id="KW-0411">Iron-sulfur</keyword>
<keyword id="KW-0414">Isoprene biosynthesis</keyword>
<keyword id="KW-0479">Metal-binding</keyword>
<keyword id="KW-0560">Oxidoreductase</keyword>
<name>ISPG_PSEE4</name>
<comment type="function">
    <text evidence="1">Converts 2C-methyl-D-erythritol 2,4-cyclodiphosphate (ME-2,4cPP) into 1-hydroxy-2-methyl-2-(E)-butenyl 4-diphosphate.</text>
</comment>
<comment type="catalytic activity">
    <reaction evidence="1">
        <text>(2E)-4-hydroxy-3-methylbut-2-enyl diphosphate + oxidized [flavodoxin] + H2O + 2 H(+) = 2-C-methyl-D-erythritol 2,4-cyclic diphosphate + reduced [flavodoxin]</text>
        <dbReference type="Rhea" id="RHEA:43604"/>
        <dbReference type="Rhea" id="RHEA-COMP:10622"/>
        <dbReference type="Rhea" id="RHEA-COMP:10623"/>
        <dbReference type="ChEBI" id="CHEBI:15377"/>
        <dbReference type="ChEBI" id="CHEBI:15378"/>
        <dbReference type="ChEBI" id="CHEBI:57618"/>
        <dbReference type="ChEBI" id="CHEBI:58210"/>
        <dbReference type="ChEBI" id="CHEBI:58483"/>
        <dbReference type="ChEBI" id="CHEBI:128753"/>
        <dbReference type="EC" id="1.17.7.3"/>
    </reaction>
</comment>
<comment type="cofactor">
    <cofactor evidence="1">
        <name>[4Fe-4S] cluster</name>
        <dbReference type="ChEBI" id="CHEBI:49883"/>
    </cofactor>
    <text evidence="1">Binds 1 [4Fe-4S] cluster.</text>
</comment>
<comment type="pathway">
    <text evidence="1">Isoprenoid biosynthesis; isopentenyl diphosphate biosynthesis via DXP pathway; isopentenyl diphosphate from 1-deoxy-D-xylulose 5-phosphate: step 5/6.</text>
</comment>
<comment type="similarity">
    <text evidence="1">Belongs to the IspG family.</text>
</comment>
<organism>
    <name type="scientific">Pseudomonas entomophila (strain L48)</name>
    <dbReference type="NCBI Taxonomy" id="384676"/>
    <lineage>
        <taxon>Bacteria</taxon>
        <taxon>Pseudomonadati</taxon>
        <taxon>Pseudomonadota</taxon>
        <taxon>Gammaproteobacteria</taxon>
        <taxon>Pseudomonadales</taxon>
        <taxon>Pseudomonadaceae</taxon>
        <taxon>Pseudomonas</taxon>
    </lineage>
</organism>
<sequence>MHGESPIKRRESRKIWVGNVPVGGDAPIAVQSMTNTDTNDVAATVAQIQRLVDAGVDIVRVSVPDMDAAEAFGKIKKLVSVPLVADIHFDYKIALRVAELGVDCLRINPGNIGREDRVRAVVDAARDRGIPIRIGVNAGSLEKDLQKKYGEPTPAALVESALRHVEHLDRLDFQDFKVSVKASDVFMAVEAYRLLAKQIIQPLHLGITEAGGLRSGTVKSAVGLGMLLAEGIGDTIRISLAADPVEEVKVGYDILKSLHLRSRGINFIACPSCSRQNFDVVKTMNELEGRLEDLLVPLDVAVIGCVVNGPGEAKESHVGLTGGTPNLVYIDGKPSQKLNNDNLVDELEKLIRQKAAEKAEADAALIARG</sequence>
<gene>
    <name evidence="1" type="primary">ispG</name>
    <name type="ordered locus">PSEEN1021</name>
</gene>
<protein>
    <recommendedName>
        <fullName evidence="1">4-hydroxy-3-methylbut-2-en-1-yl diphosphate synthase (flavodoxin)</fullName>
        <ecNumber evidence="1">1.17.7.3</ecNumber>
    </recommendedName>
    <alternativeName>
        <fullName evidence="1">1-hydroxy-2-methyl-2-(E)-butenyl 4-diphosphate synthase</fullName>
    </alternativeName>
</protein>
<accession>Q1IEI1</accession>
<dbReference type="EC" id="1.17.7.3" evidence="1"/>
<dbReference type="EMBL" id="CT573326">
    <property type="protein sequence ID" value="CAK13924.1"/>
    <property type="molecule type" value="Genomic_DNA"/>
</dbReference>
<dbReference type="RefSeq" id="WP_011532347.1">
    <property type="nucleotide sequence ID" value="NC_008027.1"/>
</dbReference>
<dbReference type="SMR" id="Q1IEI1"/>
<dbReference type="STRING" id="384676.PSEEN1021"/>
<dbReference type="GeneID" id="32804316"/>
<dbReference type="KEGG" id="pen:PSEEN1021"/>
<dbReference type="eggNOG" id="COG0821">
    <property type="taxonomic scope" value="Bacteria"/>
</dbReference>
<dbReference type="HOGENOM" id="CLU_042258_0_0_6"/>
<dbReference type="OrthoDB" id="9803214at2"/>
<dbReference type="UniPathway" id="UPA00056">
    <property type="reaction ID" value="UER00096"/>
</dbReference>
<dbReference type="Proteomes" id="UP000000658">
    <property type="component" value="Chromosome"/>
</dbReference>
<dbReference type="GO" id="GO:0051539">
    <property type="term" value="F:4 iron, 4 sulfur cluster binding"/>
    <property type="evidence" value="ECO:0007669"/>
    <property type="project" value="UniProtKB-UniRule"/>
</dbReference>
<dbReference type="GO" id="GO:0046429">
    <property type="term" value="F:4-hydroxy-3-methylbut-2-en-1-yl diphosphate synthase activity (ferredoxin)"/>
    <property type="evidence" value="ECO:0007669"/>
    <property type="project" value="UniProtKB-UniRule"/>
</dbReference>
<dbReference type="GO" id="GO:0141197">
    <property type="term" value="F:4-hydroxy-3-methylbut-2-enyl-diphosphate synthase activity (flavodoxin)"/>
    <property type="evidence" value="ECO:0007669"/>
    <property type="project" value="UniProtKB-EC"/>
</dbReference>
<dbReference type="GO" id="GO:0005506">
    <property type="term" value="F:iron ion binding"/>
    <property type="evidence" value="ECO:0007669"/>
    <property type="project" value="InterPro"/>
</dbReference>
<dbReference type="GO" id="GO:0019288">
    <property type="term" value="P:isopentenyl diphosphate biosynthetic process, methylerythritol 4-phosphate pathway"/>
    <property type="evidence" value="ECO:0007669"/>
    <property type="project" value="UniProtKB-UniRule"/>
</dbReference>
<dbReference type="GO" id="GO:0016114">
    <property type="term" value="P:terpenoid biosynthetic process"/>
    <property type="evidence" value="ECO:0007669"/>
    <property type="project" value="InterPro"/>
</dbReference>
<dbReference type="FunFam" id="3.20.20.20:FF:000001">
    <property type="entry name" value="4-hydroxy-3-methylbut-2-en-1-yl diphosphate synthase (flavodoxin)"/>
    <property type="match status" value="1"/>
</dbReference>
<dbReference type="Gene3D" id="3.20.20.20">
    <property type="entry name" value="Dihydropteroate synthase-like"/>
    <property type="match status" value="1"/>
</dbReference>
<dbReference type="Gene3D" id="3.30.413.10">
    <property type="entry name" value="Sulfite Reductase Hemoprotein, domain 1"/>
    <property type="match status" value="1"/>
</dbReference>
<dbReference type="HAMAP" id="MF_00159">
    <property type="entry name" value="IspG"/>
    <property type="match status" value="1"/>
</dbReference>
<dbReference type="InterPro" id="IPR011005">
    <property type="entry name" value="Dihydropteroate_synth-like_sf"/>
</dbReference>
<dbReference type="InterPro" id="IPR016425">
    <property type="entry name" value="IspG_bac"/>
</dbReference>
<dbReference type="InterPro" id="IPR004588">
    <property type="entry name" value="IspG_bac-typ"/>
</dbReference>
<dbReference type="InterPro" id="IPR045854">
    <property type="entry name" value="NO2/SO3_Rdtase_4Fe4S_sf"/>
</dbReference>
<dbReference type="NCBIfam" id="TIGR00612">
    <property type="entry name" value="ispG_gcpE"/>
    <property type="match status" value="1"/>
</dbReference>
<dbReference type="NCBIfam" id="NF001540">
    <property type="entry name" value="PRK00366.1"/>
    <property type="match status" value="1"/>
</dbReference>
<dbReference type="PANTHER" id="PTHR30454">
    <property type="entry name" value="4-HYDROXY-3-METHYLBUT-2-EN-1-YL DIPHOSPHATE SYNTHASE"/>
    <property type="match status" value="1"/>
</dbReference>
<dbReference type="PANTHER" id="PTHR30454:SF0">
    <property type="entry name" value="4-HYDROXY-3-METHYLBUT-2-EN-1-YL DIPHOSPHATE SYNTHASE (FERREDOXIN), CHLOROPLASTIC"/>
    <property type="match status" value="1"/>
</dbReference>
<dbReference type="Pfam" id="PF04551">
    <property type="entry name" value="GcpE"/>
    <property type="match status" value="1"/>
</dbReference>
<dbReference type="PIRSF" id="PIRSF004640">
    <property type="entry name" value="IspG"/>
    <property type="match status" value="1"/>
</dbReference>
<dbReference type="SUPFAM" id="SSF51412">
    <property type="entry name" value="Inosine monophosphate dehydrogenase (IMPDH)"/>
    <property type="match status" value="1"/>
</dbReference>
<dbReference type="SUPFAM" id="SSF56014">
    <property type="entry name" value="Nitrite and sulphite reductase 4Fe-4S domain-like"/>
    <property type="match status" value="1"/>
</dbReference>
<feature type="chain" id="PRO_1000011498" description="4-hydroxy-3-methylbut-2-en-1-yl diphosphate synthase (flavodoxin)">
    <location>
        <begin position="1"/>
        <end position="369"/>
    </location>
</feature>
<feature type="binding site" evidence="1">
    <location>
        <position position="270"/>
    </location>
    <ligand>
        <name>[4Fe-4S] cluster</name>
        <dbReference type="ChEBI" id="CHEBI:49883"/>
    </ligand>
</feature>
<feature type="binding site" evidence="1">
    <location>
        <position position="273"/>
    </location>
    <ligand>
        <name>[4Fe-4S] cluster</name>
        <dbReference type="ChEBI" id="CHEBI:49883"/>
    </ligand>
</feature>
<feature type="binding site" evidence="1">
    <location>
        <position position="305"/>
    </location>
    <ligand>
        <name>[4Fe-4S] cluster</name>
        <dbReference type="ChEBI" id="CHEBI:49883"/>
    </ligand>
</feature>
<feature type="binding site" evidence="1">
    <location>
        <position position="312"/>
    </location>
    <ligand>
        <name>[4Fe-4S] cluster</name>
        <dbReference type="ChEBI" id="CHEBI:49883"/>
    </ligand>
</feature>
<evidence type="ECO:0000255" key="1">
    <source>
        <dbReference type="HAMAP-Rule" id="MF_00159"/>
    </source>
</evidence>
<reference key="1">
    <citation type="journal article" date="2006" name="Nat. Biotechnol.">
        <title>Complete genome sequence of the entomopathogenic and metabolically versatile soil bacterium Pseudomonas entomophila.</title>
        <authorList>
            <person name="Vodovar N."/>
            <person name="Vallenet D."/>
            <person name="Cruveiller S."/>
            <person name="Rouy Z."/>
            <person name="Barbe V."/>
            <person name="Acosta C."/>
            <person name="Cattolico L."/>
            <person name="Jubin C."/>
            <person name="Lajus A."/>
            <person name="Segurens B."/>
            <person name="Vacherie B."/>
            <person name="Wincker P."/>
            <person name="Weissenbach J."/>
            <person name="Lemaitre B."/>
            <person name="Medigue C."/>
            <person name="Boccard F."/>
        </authorList>
    </citation>
    <scope>NUCLEOTIDE SEQUENCE [LARGE SCALE GENOMIC DNA]</scope>
    <source>
        <strain>L48</strain>
    </source>
</reference>